<organism>
    <name type="scientific">Serratia proteamaculans (strain 568)</name>
    <dbReference type="NCBI Taxonomy" id="399741"/>
    <lineage>
        <taxon>Bacteria</taxon>
        <taxon>Pseudomonadati</taxon>
        <taxon>Pseudomonadota</taxon>
        <taxon>Gammaproteobacteria</taxon>
        <taxon>Enterobacterales</taxon>
        <taxon>Yersiniaceae</taxon>
        <taxon>Serratia</taxon>
    </lineage>
</organism>
<gene>
    <name evidence="1" type="primary">tdh</name>
    <name type="ordered locus">Spro_4823</name>
</gene>
<keyword id="KW-0963">Cytoplasm</keyword>
<keyword id="KW-0479">Metal-binding</keyword>
<keyword id="KW-0520">NAD</keyword>
<keyword id="KW-0560">Oxidoreductase</keyword>
<keyword id="KW-0862">Zinc</keyword>
<proteinExistence type="inferred from homology"/>
<reference key="1">
    <citation type="submission" date="2007-09" db="EMBL/GenBank/DDBJ databases">
        <title>Complete sequence of chromosome of Serratia proteamaculans 568.</title>
        <authorList>
            <consortium name="US DOE Joint Genome Institute"/>
            <person name="Copeland A."/>
            <person name="Lucas S."/>
            <person name="Lapidus A."/>
            <person name="Barry K."/>
            <person name="Glavina del Rio T."/>
            <person name="Dalin E."/>
            <person name="Tice H."/>
            <person name="Pitluck S."/>
            <person name="Chain P."/>
            <person name="Malfatti S."/>
            <person name="Shin M."/>
            <person name="Vergez L."/>
            <person name="Schmutz J."/>
            <person name="Larimer F."/>
            <person name="Land M."/>
            <person name="Hauser L."/>
            <person name="Kyrpides N."/>
            <person name="Kim E."/>
            <person name="Taghavi S."/>
            <person name="Newman L."/>
            <person name="Vangronsveld J."/>
            <person name="van der Lelie D."/>
            <person name="Richardson P."/>
        </authorList>
    </citation>
    <scope>NUCLEOTIDE SEQUENCE [LARGE SCALE GENOMIC DNA]</scope>
    <source>
        <strain>568</strain>
    </source>
</reference>
<name>TDH_SERP5</name>
<accession>A8GLC6</accession>
<protein>
    <recommendedName>
        <fullName evidence="1">L-threonine 3-dehydrogenase</fullName>
        <shortName evidence="1">TDH</shortName>
        <ecNumber evidence="1">1.1.1.103</ecNumber>
    </recommendedName>
</protein>
<dbReference type="EC" id="1.1.1.103" evidence="1"/>
<dbReference type="EMBL" id="CP000826">
    <property type="protein sequence ID" value="ABV43916.1"/>
    <property type="molecule type" value="Genomic_DNA"/>
</dbReference>
<dbReference type="SMR" id="A8GLC6"/>
<dbReference type="STRING" id="399741.Spro_4823"/>
<dbReference type="KEGG" id="spe:Spro_4823"/>
<dbReference type="eggNOG" id="COG1063">
    <property type="taxonomic scope" value="Bacteria"/>
</dbReference>
<dbReference type="HOGENOM" id="CLU_026673_11_0_6"/>
<dbReference type="OrthoDB" id="9773078at2"/>
<dbReference type="UniPathway" id="UPA00046">
    <property type="reaction ID" value="UER00505"/>
</dbReference>
<dbReference type="GO" id="GO:0005737">
    <property type="term" value="C:cytoplasm"/>
    <property type="evidence" value="ECO:0007669"/>
    <property type="project" value="UniProtKB-SubCell"/>
</dbReference>
<dbReference type="GO" id="GO:0008743">
    <property type="term" value="F:L-threonine 3-dehydrogenase activity"/>
    <property type="evidence" value="ECO:0007669"/>
    <property type="project" value="UniProtKB-UniRule"/>
</dbReference>
<dbReference type="GO" id="GO:0008270">
    <property type="term" value="F:zinc ion binding"/>
    <property type="evidence" value="ECO:0007669"/>
    <property type="project" value="UniProtKB-UniRule"/>
</dbReference>
<dbReference type="GO" id="GO:0019518">
    <property type="term" value="P:L-threonine catabolic process to glycine"/>
    <property type="evidence" value="ECO:0007669"/>
    <property type="project" value="UniProtKB-UniPathway"/>
</dbReference>
<dbReference type="FunFam" id="3.40.50.720:FF:000059">
    <property type="entry name" value="L-threonine 3-dehydrogenase"/>
    <property type="match status" value="1"/>
</dbReference>
<dbReference type="Gene3D" id="3.90.180.10">
    <property type="entry name" value="Medium-chain alcohol dehydrogenases, catalytic domain"/>
    <property type="match status" value="1"/>
</dbReference>
<dbReference type="Gene3D" id="3.40.50.720">
    <property type="entry name" value="NAD(P)-binding Rossmann-like Domain"/>
    <property type="match status" value="1"/>
</dbReference>
<dbReference type="HAMAP" id="MF_00627">
    <property type="entry name" value="Thr_dehydrog"/>
    <property type="match status" value="1"/>
</dbReference>
<dbReference type="InterPro" id="IPR013149">
    <property type="entry name" value="ADH-like_C"/>
</dbReference>
<dbReference type="InterPro" id="IPR013154">
    <property type="entry name" value="ADH-like_N"/>
</dbReference>
<dbReference type="InterPro" id="IPR002328">
    <property type="entry name" value="ADH_Zn_CS"/>
</dbReference>
<dbReference type="InterPro" id="IPR011032">
    <property type="entry name" value="GroES-like_sf"/>
</dbReference>
<dbReference type="InterPro" id="IPR004627">
    <property type="entry name" value="L-Threonine_3-DHase"/>
</dbReference>
<dbReference type="InterPro" id="IPR036291">
    <property type="entry name" value="NAD(P)-bd_dom_sf"/>
</dbReference>
<dbReference type="InterPro" id="IPR020843">
    <property type="entry name" value="PKS_ER"/>
</dbReference>
<dbReference type="InterPro" id="IPR050129">
    <property type="entry name" value="Zn_alcohol_dh"/>
</dbReference>
<dbReference type="NCBIfam" id="NF003808">
    <property type="entry name" value="PRK05396.1"/>
    <property type="match status" value="1"/>
</dbReference>
<dbReference type="NCBIfam" id="TIGR00692">
    <property type="entry name" value="tdh"/>
    <property type="match status" value="1"/>
</dbReference>
<dbReference type="PANTHER" id="PTHR43401">
    <property type="entry name" value="L-THREONINE 3-DEHYDROGENASE"/>
    <property type="match status" value="1"/>
</dbReference>
<dbReference type="PANTHER" id="PTHR43401:SF2">
    <property type="entry name" value="L-THREONINE 3-DEHYDROGENASE"/>
    <property type="match status" value="1"/>
</dbReference>
<dbReference type="Pfam" id="PF08240">
    <property type="entry name" value="ADH_N"/>
    <property type="match status" value="1"/>
</dbReference>
<dbReference type="Pfam" id="PF00107">
    <property type="entry name" value="ADH_zinc_N"/>
    <property type="match status" value="1"/>
</dbReference>
<dbReference type="SMART" id="SM00829">
    <property type="entry name" value="PKS_ER"/>
    <property type="match status" value="1"/>
</dbReference>
<dbReference type="SUPFAM" id="SSF50129">
    <property type="entry name" value="GroES-like"/>
    <property type="match status" value="1"/>
</dbReference>
<dbReference type="SUPFAM" id="SSF51735">
    <property type="entry name" value="NAD(P)-binding Rossmann-fold domains"/>
    <property type="match status" value="1"/>
</dbReference>
<dbReference type="PROSITE" id="PS00059">
    <property type="entry name" value="ADH_ZINC"/>
    <property type="match status" value="1"/>
</dbReference>
<sequence length="341" mass="37295">MKALSKLKAEEGIWMTDVPQPELGHNDIMIKIRKTAICGTDVHIYNWDEWSQKTIPVPMVVGHEYVGEVVAIGQEVKGFTVGDRVSGEGHITCGHCRNCRGGRTHLCRNTTGVGVNRPGSFAEYLVIPAFNAFKIPDNISDELASIFDPFGNAVHTALSFDLVGEDVLVSGAGPIGIMAAAVCKHVGARHVVITDVNEYRLDLARKMGVTRAVNVSKENLNDVMAELGMTEGFDVGLEMSGAPPAFRTLLNAMNHGGRIAMLGIPPSDMSIDWNQVIFKGLFIKGIYGREMFETWYKMAALIQSGLDLTPIITHRFTIDQFQQGFDAMRSGQSGKVVLSWD</sequence>
<evidence type="ECO:0000255" key="1">
    <source>
        <dbReference type="HAMAP-Rule" id="MF_00627"/>
    </source>
</evidence>
<feature type="chain" id="PRO_1000061395" description="L-threonine 3-dehydrogenase">
    <location>
        <begin position="1"/>
        <end position="341"/>
    </location>
</feature>
<feature type="active site" description="Charge relay system" evidence="1">
    <location>
        <position position="40"/>
    </location>
</feature>
<feature type="active site" description="Charge relay system" evidence="1">
    <location>
        <position position="43"/>
    </location>
</feature>
<feature type="binding site" evidence="1">
    <location>
        <position position="38"/>
    </location>
    <ligand>
        <name>Zn(2+)</name>
        <dbReference type="ChEBI" id="CHEBI:29105"/>
        <label>1</label>
        <note>catalytic</note>
    </ligand>
</feature>
<feature type="binding site" evidence="1">
    <location>
        <position position="63"/>
    </location>
    <ligand>
        <name>Zn(2+)</name>
        <dbReference type="ChEBI" id="CHEBI:29105"/>
        <label>1</label>
        <note>catalytic</note>
    </ligand>
</feature>
<feature type="binding site" evidence="1">
    <location>
        <position position="64"/>
    </location>
    <ligand>
        <name>Zn(2+)</name>
        <dbReference type="ChEBI" id="CHEBI:29105"/>
        <label>1</label>
        <note>catalytic</note>
    </ligand>
</feature>
<feature type="binding site" evidence="1">
    <location>
        <position position="93"/>
    </location>
    <ligand>
        <name>Zn(2+)</name>
        <dbReference type="ChEBI" id="CHEBI:29105"/>
        <label>2</label>
    </ligand>
</feature>
<feature type="binding site" evidence="1">
    <location>
        <position position="96"/>
    </location>
    <ligand>
        <name>Zn(2+)</name>
        <dbReference type="ChEBI" id="CHEBI:29105"/>
        <label>2</label>
    </ligand>
</feature>
<feature type="binding site" evidence="1">
    <location>
        <position position="99"/>
    </location>
    <ligand>
        <name>Zn(2+)</name>
        <dbReference type="ChEBI" id="CHEBI:29105"/>
        <label>2</label>
    </ligand>
</feature>
<feature type="binding site" evidence="1">
    <location>
        <position position="107"/>
    </location>
    <ligand>
        <name>Zn(2+)</name>
        <dbReference type="ChEBI" id="CHEBI:29105"/>
        <label>2</label>
    </ligand>
</feature>
<feature type="binding site" evidence="1">
    <location>
        <position position="175"/>
    </location>
    <ligand>
        <name>NAD(+)</name>
        <dbReference type="ChEBI" id="CHEBI:57540"/>
    </ligand>
</feature>
<feature type="binding site" evidence="1">
    <location>
        <position position="195"/>
    </location>
    <ligand>
        <name>NAD(+)</name>
        <dbReference type="ChEBI" id="CHEBI:57540"/>
    </ligand>
</feature>
<feature type="binding site" evidence="1">
    <location>
        <position position="200"/>
    </location>
    <ligand>
        <name>NAD(+)</name>
        <dbReference type="ChEBI" id="CHEBI:57540"/>
    </ligand>
</feature>
<feature type="binding site" evidence="1">
    <location>
        <begin position="262"/>
        <end position="264"/>
    </location>
    <ligand>
        <name>NAD(+)</name>
        <dbReference type="ChEBI" id="CHEBI:57540"/>
    </ligand>
</feature>
<feature type="binding site" evidence="1">
    <location>
        <begin position="286"/>
        <end position="287"/>
    </location>
    <ligand>
        <name>NAD(+)</name>
        <dbReference type="ChEBI" id="CHEBI:57540"/>
    </ligand>
</feature>
<feature type="site" description="Important for catalytic activity for the proton relay mechanism but does not participate directly in the coordination of zinc atom" evidence="1">
    <location>
        <position position="148"/>
    </location>
</feature>
<comment type="function">
    <text evidence="1">Catalyzes the NAD(+)-dependent oxidation of L-threonine to 2-amino-3-ketobutyrate.</text>
</comment>
<comment type="catalytic activity">
    <reaction evidence="1">
        <text>L-threonine + NAD(+) = (2S)-2-amino-3-oxobutanoate + NADH + H(+)</text>
        <dbReference type="Rhea" id="RHEA:13161"/>
        <dbReference type="ChEBI" id="CHEBI:15378"/>
        <dbReference type="ChEBI" id="CHEBI:57540"/>
        <dbReference type="ChEBI" id="CHEBI:57926"/>
        <dbReference type="ChEBI" id="CHEBI:57945"/>
        <dbReference type="ChEBI" id="CHEBI:78948"/>
        <dbReference type="EC" id="1.1.1.103"/>
    </reaction>
</comment>
<comment type="cofactor">
    <cofactor evidence="1">
        <name>Zn(2+)</name>
        <dbReference type="ChEBI" id="CHEBI:29105"/>
    </cofactor>
    <text evidence="1">Binds 2 Zn(2+) ions per subunit.</text>
</comment>
<comment type="pathway">
    <text evidence="1">Amino-acid degradation; L-threonine degradation via oxydo-reductase pathway; glycine from L-threonine: step 1/2.</text>
</comment>
<comment type="subunit">
    <text evidence="1">Homotetramer.</text>
</comment>
<comment type="subcellular location">
    <subcellularLocation>
        <location evidence="1">Cytoplasm</location>
    </subcellularLocation>
</comment>
<comment type="similarity">
    <text evidence="1">Belongs to the zinc-containing alcohol dehydrogenase family.</text>
</comment>